<feature type="initiator methionine" description="Removed" evidence="2">
    <location>
        <position position="1"/>
    </location>
</feature>
<feature type="chain" id="PRO_0000226722" description="Ferritin light chain">
    <location>
        <begin position="2"/>
        <end position="175"/>
    </location>
</feature>
<feature type="domain" description="Ferritin-like diiron" evidence="5">
    <location>
        <begin position="7"/>
        <end position="156"/>
    </location>
</feature>
<feature type="binding site" evidence="5">
    <location>
        <position position="54"/>
    </location>
    <ligand>
        <name>Fe cation</name>
        <dbReference type="ChEBI" id="CHEBI:24875"/>
    </ligand>
</feature>
<feature type="binding site" evidence="5">
    <location>
        <position position="57"/>
    </location>
    <ligand>
        <name>Fe cation</name>
        <dbReference type="ChEBI" id="CHEBI:24875"/>
    </ligand>
</feature>
<feature type="binding site" evidence="5">
    <location>
        <position position="58"/>
    </location>
    <ligand>
        <name>Fe cation</name>
        <dbReference type="ChEBI" id="CHEBI:24875"/>
    </ligand>
</feature>
<feature type="binding site" evidence="5">
    <location>
        <position position="61"/>
    </location>
    <ligand>
        <name>Fe cation</name>
        <dbReference type="ChEBI" id="CHEBI:24875"/>
    </ligand>
</feature>
<feature type="binding site" evidence="5">
    <location>
        <position position="64"/>
    </location>
    <ligand>
        <name>Fe cation</name>
        <dbReference type="ChEBI" id="CHEBI:24875"/>
    </ligand>
</feature>
<feature type="modified residue" description="N-acetylserine" evidence="2">
    <location>
        <position position="2"/>
    </location>
</feature>
<dbReference type="EMBL" id="AB193258">
    <property type="protein sequence ID" value="BAE78406.1"/>
    <property type="molecule type" value="mRNA"/>
</dbReference>
<dbReference type="RefSeq" id="NP_001041615.1">
    <property type="nucleotide sequence ID" value="NM_001048150.1"/>
</dbReference>
<dbReference type="SMR" id="Q2MHN1"/>
<dbReference type="FunCoup" id="Q2MHN1">
    <property type="interactions" value="4"/>
</dbReference>
<dbReference type="STRING" id="9685.ENSFCAP00000003087"/>
<dbReference type="PaxDb" id="9685-ENSFCAP00000003087"/>
<dbReference type="Ensembl" id="ENSFCAT00000003348.5">
    <property type="protein sequence ID" value="ENSFCAP00000003087.3"/>
    <property type="gene ID" value="ENSFCAG00000003348.5"/>
</dbReference>
<dbReference type="GeneID" id="654515"/>
<dbReference type="KEGG" id="fca:654515"/>
<dbReference type="CTD" id="2512"/>
<dbReference type="eggNOG" id="KOG2332">
    <property type="taxonomic scope" value="Eukaryota"/>
</dbReference>
<dbReference type="GeneTree" id="ENSGT00940000153096"/>
<dbReference type="HOGENOM" id="CLU_065681_4_0_1"/>
<dbReference type="InParanoid" id="Q2MHN1"/>
<dbReference type="OMA" id="CARADPH"/>
<dbReference type="OrthoDB" id="186462at2759"/>
<dbReference type="Proteomes" id="UP000011712">
    <property type="component" value="Chromosome E2"/>
</dbReference>
<dbReference type="Bgee" id="ENSFCAG00000003348">
    <property type="expression patterns" value="Expressed in adult mammalian kidney and 10 other cell types or tissues"/>
</dbReference>
<dbReference type="GO" id="GO:0044754">
    <property type="term" value="C:autolysosome"/>
    <property type="evidence" value="ECO:0007669"/>
    <property type="project" value="UniProtKB-SubCell"/>
</dbReference>
<dbReference type="GO" id="GO:0005776">
    <property type="term" value="C:autophagosome"/>
    <property type="evidence" value="ECO:0007669"/>
    <property type="project" value="UniProtKB-SubCell"/>
</dbReference>
<dbReference type="GO" id="GO:0005737">
    <property type="term" value="C:cytoplasm"/>
    <property type="evidence" value="ECO:0000318"/>
    <property type="project" value="GO_Central"/>
</dbReference>
<dbReference type="GO" id="GO:0031410">
    <property type="term" value="C:cytoplasmic vesicle"/>
    <property type="evidence" value="ECO:0007669"/>
    <property type="project" value="UniProtKB-KW"/>
</dbReference>
<dbReference type="GO" id="GO:0070288">
    <property type="term" value="C:ferritin complex"/>
    <property type="evidence" value="ECO:0000250"/>
    <property type="project" value="UniProtKB"/>
</dbReference>
<dbReference type="GO" id="GO:0008199">
    <property type="term" value="F:ferric iron binding"/>
    <property type="evidence" value="ECO:0000318"/>
    <property type="project" value="GO_Central"/>
</dbReference>
<dbReference type="GO" id="GO:0008198">
    <property type="term" value="F:ferrous iron binding"/>
    <property type="evidence" value="ECO:0000318"/>
    <property type="project" value="GO_Central"/>
</dbReference>
<dbReference type="GO" id="GO:0005506">
    <property type="term" value="F:iron ion binding"/>
    <property type="evidence" value="ECO:0000250"/>
    <property type="project" value="UniProtKB"/>
</dbReference>
<dbReference type="GO" id="GO:0006879">
    <property type="term" value="P:intracellular iron ion homeostasis"/>
    <property type="evidence" value="ECO:0007669"/>
    <property type="project" value="UniProtKB-KW"/>
</dbReference>
<dbReference type="GO" id="GO:0006826">
    <property type="term" value="P:iron ion transport"/>
    <property type="evidence" value="ECO:0007669"/>
    <property type="project" value="InterPro"/>
</dbReference>
<dbReference type="CDD" id="cd00904">
    <property type="entry name" value="Ferritin"/>
    <property type="match status" value="1"/>
</dbReference>
<dbReference type="FunFam" id="1.20.1260.10:FF:000009">
    <property type="entry name" value="Ferritin light chain"/>
    <property type="match status" value="1"/>
</dbReference>
<dbReference type="Gene3D" id="1.20.1260.10">
    <property type="match status" value="1"/>
</dbReference>
<dbReference type="InterPro" id="IPR001519">
    <property type="entry name" value="Ferritin"/>
</dbReference>
<dbReference type="InterPro" id="IPR012347">
    <property type="entry name" value="Ferritin-like"/>
</dbReference>
<dbReference type="InterPro" id="IPR009040">
    <property type="entry name" value="Ferritin-like_diiron"/>
</dbReference>
<dbReference type="InterPro" id="IPR009078">
    <property type="entry name" value="Ferritin-like_SF"/>
</dbReference>
<dbReference type="InterPro" id="IPR014034">
    <property type="entry name" value="Ferritin_CS"/>
</dbReference>
<dbReference type="InterPro" id="IPR008331">
    <property type="entry name" value="Ferritin_DPS_dom"/>
</dbReference>
<dbReference type="PANTHER" id="PTHR11431">
    <property type="entry name" value="FERRITIN"/>
    <property type="match status" value="1"/>
</dbReference>
<dbReference type="PANTHER" id="PTHR11431:SF47">
    <property type="entry name" value="FERRITIN LIGHT CHAIN"/>
    <property type="match status" value="1"/>
</dbReference>
<dbReference type="Pfam" id="PF00210">
    <property type="entry name" value="Ferritin"/>
    <property type="match status" value="1"/>
</dbReference>
<dbReference type="SUPFAM" id="SSF47240">
    <property type="entry name" value="Ferritin-like"/>
    <property type="match status" value="1"/>
</dbReference>
<dbReference type="PROSITE" id="PS00540">
    <property type="entry name" value="FERRITIN_1"/>
    <property type="match status" value="1"/>
</dbReference>
<dbReference type="PROSITE" id="PS00204">
    <property type="entry name" value="FERRITIN_2"/>
    <property type="match status" value="1"/>
</dbReference>
<dbReference type="PROSITE" id="PS50905">
    <property type="entry name" value="FERRITIN_LIKE"/>
    <property type="match status" value="1"/>
</dbReference>
<gene>
    <name type="primary">FTL</name>
</gene>
<reference key="1">
    <citation type="journal article" date="2005" name="Jui Seikagaku">
        <title>Sequence analysis of feline ferritin H and L subunit cDNAs.</title>
        <authorList>
            <person name="Orino K."/>
            <person name="Hirata A."/>
            <person name="Watanabe K."/>
        </authorList>
    </citation>
    <scope>NUCLEOTIDE SEQUENCE [MRNA]</scope>
    <source>
        <tissue>Leukocyte</tissue>
    </source>
</reference>
<proteinExistence type="evidence at transcript level"/>
<sequence length="175" mass="20103">MSSQIRQNYSTEVEAAVNRLVNMHLRASYTYLSLGFYFDRDDVALEGVGHFFRELAEEKREGAERLLKMQNQRGGRALFLDVQKPSQDEWGKTLDAMEAALLLEKNLNQGLLDLHALGSARADPHLCDFLENHFLDEEVKLIKKMGDHLTNLRRLSGPQAELGEYLFERLTLKHD</sequence>
<organism>
    <name type="scientific">Felis catus</name>
    <name type="common">Cat</name>
    <name type="synonym">Felis silvestris catus</name>
    <dbReference type="NCBI Taxonomy" id="9685"/>
    <lineage>
        <taxon>Eukaryota</taxon>
        <taxon>Metazoa</taxon>
        <taxon>Chordata</taxon>
        <taxon>Craniata</taxon>
        <taxon>Vertebrata</taxon>
        <taxon>Euteleostomi</taxon>
        <taxon>Mammalia</taxon>
        <taxon>Eutheria</taxon>
        <taxon>Laurasiatheria</taxon>
        <taxon>Carnivora</taxon>
        <taxon>Feliformia</taxon>
        <taxon>Felidae</taxon>
        <taxon>Felinae</taxon>
        <taxon>Felis</taxon>
    </lineage>
</organism>
<keyword id="KW-0007">Acetylation</keyword>
<keyword id="KW-0963">Cytoplasm</keyword>
<keyword id="KW-0968">Cytoplasmic vesicle</keyword>
<keyword id="KW-0408">Iron</keyword>
<keyword id="KW-0409">Iron storage</keyword>
<keyword id="KW-0458">Lysosome</keyword>
<keyword id="KW-0479">Metal-binding</keyword>
<keyword id="KW-1185">Reference proteome</keyword>
<name>FRIL_FELCA</name>
<accession>Q2MHN1</accession>
<comment type="function">
    <text evidence="1 3">Stores iron in a soluble, non-toxic, readily available form. Important for iron homeostasis. Iron is taken up in the ferrous form and deposited as ferric hydroxides after oxidation. Also plays a role in delivery of iron to cells. Mediates iron uptake in capsule cells of the developing kidney (By similarity). Delivery to lysosomes by the cargo receptor NCOA4 for autophagic degradation and release or iron (By similarity).</text>
</comment>
<comment type="subunit">
    <text evidence="1 3">Oligomer of 24 subunits. There are two types of subunits: L (light) chain and H (heavy) chain. The major chain can be light or heavy, depending on the species and tissue type. The functional molecule forms a roughly spherical shell with a diameter of 12 nm and contains a central cavity into which the insoluble mineral iron core is deposited (By similarity). Interacts with NCOA4 (By similarity).</text>
</comment>
<comment type="subcellular location">
    <subcellularLocation>
        <location evidence="3">Cytoplasmic vesicle</location>
        <location evidence="3">Autophagosome</location>
    </subcellularLocation>
    <subcellularLocation>
        <location evidence="4">Cytoplasm</location>
    </subcellularLocation>
    <subcellularLocation>
        <location evidence="4">Autolysosome</location>
    </subcellularLocation>
</comment>
<comment type="similarity">
    <text evidence="6">Belongs to the ferritin family.</text>
</comment>
<protein>
    <recommendedName>
        <fullName>Ferritin light chain</fullName>
        <shortName>Ferritin L subunit</shortName>
    </recommendedName>
</protein>
<evidence type="ECO:0000250" key="1"/>
<evidence type="ECO:0000250" key="2">
    <source>
        <dbReference type="UniProtKB" id="P02791"/>
    </source>
</evidence>
<evidence type="ECO:0000250" key="3">
    <source>
        <dbReference type="UniProtKB" id="P02792"/>
    </source>
</evidence>
<evidence type="ECO:0000250" key="4">
    <source>
        <dbReference type="UniProtKB" id="P29391"/>
    </source>
</evidence>
<evidence type="ECO:0000255" key="5">
    <source>
        <dbReference type="PROSITE-ProRule" id="PRU00085"/>
    </source>
</evidence>
<evidence type="ECO:0000305" key="6"/>